<accession>D3ZEG1</accession>
<evidence type="ECO:0000250" key="1">
    <source>
        <dbReference type="UniProtKB" id="Q8VHL5"/>
    </source>
</evidence>
<evidence type="ECO:0000255" key="2">
    <source>
        <dbReference type="PROSITE-ProRule" id="PRU00028"/>
    </source>
</evidence>
<evidence type="ECO:0000269" key="3">
    <source>
    </source>
</evidence>
<evidence type="ECO:0000305" key="4"/>
<evidence type="ECO:0000312" key="5">
    <source>
        <dbReference type="RGD" id="1308547"/>
    </source>
</evidence>
<dbReference type="EMBL" id="AABR07059182">
    <property type="status" value="NOT_ANNOTATED_CDS"/>
    <property type="molecule type" value="Genomic_DNA"/>
</dbReference>
<dbReference type="EMBL" id="CH474020">
    <property type="protein sequence ID" value="EDL99333.1"/>
    <property type="status" value="ALT_INIT"/>
    <property type="molecule type" value="Genomic_DNA"/>
</dbReference>
<dbReference type="RefSeq" id="NP_001100043.2">
    <property type="nucleotide sequence ID" value="NM_001106573.2"/>
</dbReference>
<dbReference type="RefSeq" id="XP_006235944.1">
    <property type="nucleotide sequence ID" value="XM_006235882.3"/>
</dbReference>
<dbReference type="SMR" id="D3ZEG1"/>
<dbReference type="FunCoup" id="D3ZEG1">
    <property type="interactions" value="16"/>
</dbReference>
<dbReference type="STRING" id="10116.ENSRNOP00000012285"/>
<dbReference type="PhosphoSitePlus" id="D3ZEG1"/>
<dbReference type="PaxDb" id="10116-ENSRNOP00000012285"/>
<dbReference type="Ensembl" id="ENSRNOT00000109858.1">
    <property type="protein sequence ID" value="ENSRNOP00000093305.1"/>
    <property type="gene ID" value="ENSRNOG00000009226.7"/>
</dbReference>
<dbReference type="GeneID" id="296730"/>
<dbReference type="KEGG" id="rno:296730"/>
<dbReference type="AGR" id="RGD:1308547"/>
<dbReference type="CTD" id="155051"/>
<dbReference type="RGD" id="1308547">
    <property type="gene designation" value="Crygn"/>
</dbReference>
<dbReference type="eggNOG" id="ENOG502QV8X">
    <property type="taxonomic scope" value="Eukaryota"/>
</dbReference>
<dbReference type="GeneTree" id="ENSGT00940000159301"/>
<dbReference type="HOGENOM" id="CLU_081883_2_1_1"/>
<dbReference type="InParanoid" id="D3ZEG1"/>
<dbReference type="OMA" id="WQAHSAN"/>
<dbReference type="OrthoDB" id="5976022at2759"/>
<dbReference type="PRO" id="PR:D3ZEG1"/>
<dbReference type="Proteomes" id="UP000002494">
    <property type="component" value="Chromosome 4"/>
</dbReference>
<dbReference type="Proteomes" id="UP000234681">
    <property type="component" value="Chromosome 4"/>
</dbReference>
<dbReference type="GO" id="GO:0005212">
    <property type="term" value="F:structural constituent of eye lens"/>
    <property type="evidence" value="ECO:0000318"/>
    <property type="project" value="GO_Central"/>
</dbReference>
<dbReference type="GO" id="GO:0002088">
    <property type="term" value="P:lens development in camera-type eye"/>
    <property type="evidence" value="ECO:0000318"/>
    <property type="project" value="GO_Central"/>
</dbReference>
<dbReference type="GO" id="GO:0007601">
    <property type="term" value="P:visual perception"/>
    <property type="evidence" value="ECO:0000318"/>
    <property type="project" value="GO_Central"/>
</dbReference>
<dbReference type="FunFam" id="2.60.20.10:FF:000007">
    <property type="entry name" value="Crystallin gamma N"/>
    <property type="match status" value="1"/>
</dbReference>
<dbReference type="FunFam" id="2.60.20.10:FF:000003">
    <property type="entry name" value="Crystallin gamma S"/>
    <property type="match status" value="1"/>
</dbReference>
<dbReference type="Gene3D" id="2.60.20.10">
    <property type="entry name" value="Crystallins"/>
    <property type="match status" value="2"/>
</dbReference>
<dbReference type="InterPro" id="IPR050252">
    <property type="entry name" value="Beta/Gamma-Crystallin"/>
</dbReference>
<dbReference type="InterPro" id="IPR001064">
    <property type="entry name" value="Beta/gamma_crystallin"/>
</dbReference>
<dbReference type="InterPro" id="IPR011024">
    <property type="entry name" value="G_crystallin-like"/>
</dbReference>
<dbReference type="PANTHER" id="PTHR11818">
    <property type="entry name" value="BETA/GAMMA CRYSTALLIN"/>
    <property type="match status" value="1"/>
</dbReference>
<dbReference type="PANTHER" id="PTHR11818:SF22">
    <property type="entry name" value="GAMMA-CRYSTALLIN N"/>
    <property type="match status" value="1"/>
</dbReference>
<dbReference type="Pfam" id="PF00030">
    <property type="entry name" value="Crystall"/>
    <property type="match status" value="2"/>
</dbReference>
<dbReference type="PRINTS" id="PR01367">
    <property type="entry name" value="BGCRYSTALLIN"/>
</dbReference>
<dbReference type="SMART" id="SM00247">
    <property type="entry name" value="XTALbg"/>
    <property type="match status" value="2"/>
</dbReference>
<dbReference type="SUPFAM" id="SSF49695">
    <property type="entry name" value="gamma-Crystallin-like"/>
    <property type="match status" value="1"/>
</dbReference>
<dbReference type="PROSITE" id="PS50915">
    <property type="entry name" value="CRYSTALLIN_BETA_GAMMA"/>
    <property type="match status" value="4"/>
</dbReference>
<organism>
    <name type="scientific">Rattus norvegicus</name>
    <name type="common">Rat</name>
    <dbReference type="NCBI Taxonomy" id="10116"/>
    <lineage>
        <taxon>Eukaryota</taxon>
        <taxon>Metazoa</taxon>
        <taxon>Chordata</taxon>
        <taxon>Craniata</taxon>
        <taxon>Vertebrata</taxon>
        <taxon>Euteleostomi</taxon>
        <taxon>Mammalia</taxon>
        <taxon>Eutheria</taxon>
        <taxon>Euarchontoglires</taxon>
        <taxon>Glires</taxon>
        <taxon>Rodentia</taxon>
        <taxon>Myomorpha</taxon>
        <taxon>Muroidea</taxon>
        <taxon>Muridae</taxon>
        <taxon>Murinae</taxon>
        <taxon>Rattus</taxon>
    </lineage>
</organism>
<protein>
    <recommendedName>
        <fullName evidence="4">Gamma-crystallin N</fullName>
    </recommendedName>
    <alternativeName>
        <fullName evidence="4">Gamma-N-crystallin</fullName>
    </alternativeName>
</protein>
<keyword id="KW-0273">Eye lens protein</keyword>
<keyword id="KW-1185">Reference proteome</keyword>
<keyword id="KW-0677">Repeat</keyword>
<feature type="chain" id="PRO_0000444949" description="Gamma-crystallin N">
    <location>
        <begin position="1"/>
        <end position="183"/>
    </location>
</feature>
<feature type="domain" description="Beta/gamma crystallin 'Greek key' 1" evidence="2">
    <location>
        <begin position="6"/>
        <end position="46"/>
    </location>
</feature>
<feature type="domain" description="Beta/gamma crystallin 'Greek key' 2" evidence="2">
    <location>
        <begin position="47"/>
        <end position="89"/>
    </location>
</feature>
<feature type="domain" description="Beta/gamma crystallin 'Greek key' 3" evidence="2">
    <location>
        <begin position="95"/>
        <end position="136"/>
    </location>
</feature>
<feature type="domain" description="Beta/gamma crystallin 'Greek key' 4" evidence="2">
    <location>
        <begin position="138"/>
        <end position="180"/>
    </location>
</feature>
<comment type="function">
    <text evidence="1">Crystallins are the dominant structural components of the vertebrate eye lens. Also plays an important role for integrity and function of auditory nuclei.</text>
</comment>
<comment type="subunit">
    <text evidence="1">Monomer.</text>
</comment>
<comment type="tissue specificity">
    <text evidence="3">Detected in the auditory hindbrain where it is highly expressed in the medial nucleus of the trapezoid body, but also present in other nuclei of the superior olivary complex.</text>
</comment>
<comment type="domain">
    <text evidence="4">Has a two-domain beta-structure, folded into four very similar Greek key motifs.</text>
</comment>
<comment type="similarity">
    <text evidence="4">Belongs to the beta/gamma-crystallin family.</text>
</comment>
<comment type="sequence caution" evidence="4">
    <conflict type="erroneous initiation">
        <sequence resource="EMBL-CDS" id="EDL99333"/>
    </conflict>
    <text>Truncated N-terminus.</text>
</comment>
<gene>
    <name evidence="5" type="primary">Crygn</name>
</gene>
<proteinExistence type="evidence at transcript level"/>
<reference key="1">
    <citation type="journal article" date="2004" name="Nature">
        <title>Genome sequence of the Brown Norway rat yields insights into mammalian evolution.</title>
        <authorList>
            <person name="Gibbs R.A."/>
            <person name="Weinstock G.M."/>
            <person name="Metzker M.L."/>
            <person name="Muzny D.M."/>
            <person name="Sodergren E.J."/>
            <person name="Scherer S."/>
            <person name="Scott G."/>
            <person name="Steffen D."/>
            <person name="Worley K.C."/>
            <person name="Burch P.E."/>
            <person name="Okwuonu G."/>
            <person name="Hines S."/>
            <person name="Lewis L."/>
            <person name="Deramo C."/>
            <person name="Delgado O."/>
            <person name="Dugan-Rocha S."/>
            <person name="Miner G."/>
            <person name="Morgan M."/>
            <person name="Hawes A."/>
            <person name="Gill R."/>
            <person name="Holt R.A."/>
            <person name="Adams M.D."/>
            <person name="Amanatides P.G."/>
            <person name="Baden-Tillson H."/>
            <person name="Barnstead M."/>
            <person name="Chin S."/>
            <person name="Evans C.A."/>
            <person name="Ferriera S."/>
            <person name="Fosler C."/>
            <person name="Glodek A."/>
            <person name="Gu Z."/>
            <person name="Jennings D."/>
            <person name="Kraft C.L."/>
            <person name="Nguyen T."/>
            <person name="Pfannkoch C.M."/>
            <person name="Sitter C."/>
            <person name="Sutton G.G."/>
            <person name="Venter J.C."/>
            <person name="Woodage T."/>
            <person name="Smith D."/>
            <person name="Lee H.-M."/>
            <person name="Gustafson E."/>
            <person name="Cahill P."/>
            <person name="Kana A."/>
            <person name="Doucette-Stamm L."/>
            <person name="Weinstock K."/>
            <person name="Fechtel K."/>
            <person name="Weiss R.B."/>
            <person name="Dunn D.M."/>
            <person name="Green E.D."/>
            <person name="Blakesley R.W."/>
            <person name="Bouffard G.G."/>
            <person name="De Jong P.J."/>
            <person name="Osoegawa K."/>
            <person name="Zhu B."/>
            <person name="Marra M."/>
            <person name="Schein J."/>
            <person name="Bosdet I."/>
            <person name="Fjell C."/>
            <person name="Jones S."/>
            <person name="Krzywinski M."/>
            <person name="Mathewson C."/>
            <person name="Siddiqui A."/>
            <person name="Wye N."/>
            <person name="McPherson J."/>
            <person name="Zhao S."/>
            <person name="Fraser C.M."/>
            <person name="Shetty J."/>
            <person name="Shatsman S."/>
            <person name="Geer K."/>
            <person name="Chen Y."/>
            <person name="Abramzon S."/>
            <person name="Nierman W.C."/>
            <person name="Havlak P.H."/>
            <person name="Chen R."/>
            <person name="Durbin K.J."/>
            <person name="Egan A."/>
            <person name="Ren Y."/>
            <person name="Song X.-Z."/>
            <person name="Li B."/>
            <person name="Liu Y."/>
            <person name="Qin X."/>
            <person name="Cawley S."/>
            <person name="Cooney A.J."/>
            <person name="D'Souza L.M."/>
            <person name="Martin K."/>
            <person name="Wu J.Q."/>
            <person name="Gonzalez-Garay M.L."/>
            <person name="Jackson A.R."/>
            <person name="Kalafus K.J."/>
            <person name="McLeod M.P."/>
            <person name="Milosavljevic A."/>
            <person name="Virk D."/>
            <person name="Volkov A."/>
            <person name="Wheeler D.A."/>
            <person name="Zhang Z."/>
            <person name="Bailey J.A."/>
            <person name="Eichler E.E."/>
            <person name="Tuzun E."/>
            <person name="Birney E."/>
            <person name="Mongin E."/>
            <person name="Ureta-Vidal A."/>
            <person name="Woodwark C."/>
            <person name="Zdobnov E."/>
            <person name="Bork P."/>
            <person name="Suyama M."/>
            <person name="Torrents D."/>
            <person name="Alexandersson M."/>
            <person name="Trask B.J."/>
            <person name="Young J.M."/>
            <person name="Huang H."/>
            <person name="Wang H."/>
            <person name="Xing H."/>
            <person name="Daniels S."/>
            <person name="Gietzen D."/>
            <person name="Schmidt J."/>
            <person name="Stevens K."/>
            <person name="Vitt U."/>
            <person name="Wingrove J."/>
            <person name="Camara F."/>
            <person name="Mar Alba M."/>
            <person name="Abril J.F."/>
            <person name="Guigo R."/>
            <person name="Smit A."/>
            <person name="Dubchak I."/>
            <person name="Rubin E.M."/>
            <person name="Couronne O."/>
            <person name="Poliakov A."/>
            <person name="Huebner N."/>
            <person name="Ganten D."/>
            <person name="Goesele C."/>
            <person name="Hummel O."/>
            <person name="Kreitler T."/>
            <person name="Lee Y.-A."/>
            <person name="Monti J."/>
            <person name="Schulz H."/>
            <person name="Zimdahl H."/>
            <person name="Himmelbauer H."/>
            <person name="Lehrach H."/>
            <person name="Jacob H.J."/>
            <person name="Bromberg S."/>
            <person name="Gullings-Handley J."/>
            <person name="Jensen-Seaman M.I."/>
            <person name="Kwitek A.E."/>
            <person name="Lazar J."/>
            <person name="Pasko D."/>
            <person name="Tonellato P.J."/>
            <person name="Twigger S."/>
            <person name="Ponting C.P."/>
            <person name="Duarte J.M."/>
            <person name="Rice S."/>
            <person name="Goodstadt L."/>
            <person name="Beatson S.A."/>
            <person name="Emes R.D."/>
            <person name="Winter E.E."/>
            <person name="Webber C."/>
            <person name="Brandt P."/>
            <person name="Nyakatura G."/>
            <person name="Adetobi M."/>
            <person name="Chiaromonte F."/>
            <person name="Elnitski L."/>
            <person name="Eswara P."/>
            <person name="Hardison R.C."/>
            <person name="Hou M."/>
            <person name="Kolbe D."/>
            <person name="Makova K."/>
            <person name="Miller W."/>
            <person name="Nekrutenko A."/>
            <person name="Riemer C."/>
            <person name="Schwartz S."/>
            <person name="Taylor J."/>
            <person name="Yang S."/>
            <person name="Zhang Y."/>
            <person name="Lindpaintner K."/>
            <person name="Andrews T.D."/>
            <person name="Caccamo M."/>
            <person name="Clamp M."/>
            <person name="Clarke L."/>
            <person name="Curwen V."/>
            <person name="Durbin R.M."/>
            <person name="Eyras E."/>
            <person name="Searle S.M."/>
            <person name="Cooper G.M."/>
            <person name="Batzoglou S."/>
            <person name="Brudno M."/>
            <person name="Sidow A."/>
            <person name="Stone E.A."/>
            <person name="Payseur B.A."/>
            <person name="Bourque G."/>
            <person name="Lopez-Otin C."/>
            <person name="Puente X.S."/>
            <person name="Chakrabarti K."/>
            <person name="Chatterji S."/>
            <person name="Dewey C."/>
            <person name="Pachter L."/>
            <person name="Bray N."/>
            <person name="Yap V.B."/>
            <person name="Caspi A."/>
            <person name="Tesler G."/>
            <person name="Pevzner P.A."/>
            <person name="Haussler D."/>
            <person name="Roskin K.M."/>
            <person name="Baertsch R."/>
            <person name="Clawson H."/>
            <person name="Furey T.S."/>
            <person name="Hinrichs A.S."/>
            <person name="Karolchik D."/>
            <person name="Kent W.J."/>
            <person name="Rosenbloom K.R."/>
            <person name="Trumbower H."/>
            <person name="Weirauch M."/>
            <person name="Cooper D.N."/>
            <person name="Stenson P.D."/>
            <person name="Ma B."/>
            <person name="Brent M."/>
            <person name="Arumugam M."/>
            <person name="Shteynberg D."/>
            <person name="Copley R.R."/>
            <person name="Taylor M.S."/>
            <person name="Riethman H."/>
            <person name="Mudunuri U."/>
            <person name="Peterson J."/>
            <person name="Guyer M."/>
            <person name="Felsenfeld A."/>
            <person name="Old S."/>
            <person name="Mockrin S."/>
            <person name="Collins F.S."/>
        </authorList>
    </citation>
    <scope>NUCLEOTIDE SEQUENCE [LARGE SCALE GENOMIC DNA]</scope>
    <source>
        <strain>Brown Norway</strain>
    </source>
</reference>
<reference key="2">
    <citation type="submission" date="2005-07" db="EMBL/GenBank/DDBJ databases">
        <authorList>
            <person name="Mural R.J."/>
            <person name="Adams M.D."/>
            <person name="Myers E.W."/>
            <person name="Smith H.O."/>
            <person name="Venter J.C."/>
        </authorList>
    </citation>
    <scope>NUCLEOTIDE SEQUENCE [LARGE SCALE GENOMIC DNA] OF 8-183</scope>
</reference>
<reference key="3">
    <citation type="journal article" date="2016" name="PLoS ONE">
        <title>Functional Role of gamma-Crystallin N in the Auditory Hindbrain.</title>
        <authorList>
            <person name="Hartwich H."/>
            <person name="Rosengauer E."/>
            <person name="Ruettiger L."/>
            <person name="Wilms V."/>
            <person name="Waterholter S.K."/>
            <person name="Nothwang H.G."/>
        </authorList>
    </citation>
    <scope>TISSUE SPECIFICITY</scope>
</reference>
<name>CRGN_RAT</name>
<sequence length="183" mass="21446">MAQRSGKITLYEGKHFTGRKLEVFGDCDNFQDRGFMNRVNSIRVESGAWVCFDHPDFRGQQFILEHGDYPEFFRWNGHNDHMGSCRPVGMHGEHFRIDIFEGCNFTGQCLEFVEDCPFLQSRGWAKSCVNAIKVYGDGAWVLYEEPNYRGRMYVVERGDFRSFSDWEAHSARVQSLRRVLNFF</sequence>